<gene>
    <name evidence="1" type="primary">pyrG</name>
    <name type="ordered locus">HAH_0694</name>
</gene>
<organism>
    <name type="scientific">Haloarcula hispanica (strain ATCC 33960 / DSM 4426 / JCM 8911 / NBRC 102182 / NCIMB 2187 / VKM B-1755)</name>
    <dbReference type="NCBI Taxonomy" id="634497"/>
    <lineage>
        <taxon>Archaea</taxon>
        <taxon>Methanobacteriati</taxon>
        <taxon>Methanobacteriota</taxon>
        <taxon>Stenosarchaea group</taxon>
        <taxon>Halobacteria</taxon>
        <taxon>Halobacteriales</taxon>
        <taxon>Haloarculaceae</taxon>
        <taxon>Haloarcula</taxon>
    </lineage>
</organism>
<sequence>MPTEPETDYDPELGRKFIFVTGGVMSGLGKGITAASTGRLLKNAGFDVTAVKIDPYLNVDAGTMNPFQHGEVYVLKDGGEVDLDLGNYERFLDIDMTFDHNVTTGKTYQHVIEKERSGDYLGRTVQIIPHITDDIKRRIREAAEGNDVCIIEVGGTVGDIEGMPYLEALRQFAHEEDEDDILFTHVTLVPYSKNGEQKTKPTQHSVKELRSIGLQPDILVGRCSDKLDIDTKEKIALFCDVPTEAVFSNPDVDDIYHVPLMVEEEGLDQYVMEELDIATEALPEDERENRWRDLVTQNTEGEVDIALVGKYDLEDAYMSVHEALKHAGLEKNVDVNVQWVNSEKMNDHHADRMREADAIVVPGGFGARGTEGKIEAIRYARENDIPFLGLCLGFQMAVVEYARNVLDLDDAHSAELDEDTPHPVIDILPEQYEIEDMGGTMRLGAHETEIDANTLAATLYGGESCTERHRHRYEVNPEYIDDLEAAGLKFSGYAENRMEILELAPEDHPYFIGTQFHPEFRSRPTRASPPFVGLLEAVLGDDPHTVTTEEVSH</sequence>
<keyword id="KW-0067">ATP-binding</keyword>
<keyword id="KW-0963">Cytoplasm</keyword>
<keyword id="KW-0315">Glutamine amidotransferase</keyword>
<keyword id="KW-0436">Ligase</keyword>
<keyword id="KW-0460">Magnesium</keyword>
<keyword id="KW-0479">Metal-binding</keyword>
<keyword id="KW-0547">Nucleotide-binding</keyword>
<keyword id="KW-0665">Pyrimidine biosynthesis</keyword>
<comment type="function">
    <text evidence="1">Catalyzes the ATP-dependent amination of UTP to CTP with either L-glutamine or ammonia as the source of nitrogen. Regulates intracellular CTP levels through interactions with the four ribonucleotide triphosphates.</text>
</comment>
<comment type="catalytic activity">
    <reaction evidence="1">
        <text>UTP + L-glutamine + ATP + H2O = CTP + L-glutamate + ADP + phosphate + 2 H(+)</text>
        <dbReference type="Rhea" id="RHEA:26426"/>
        <dbReference type="ChEBI" id="CHEBI:15377"/>
        <dbReference type="ChEBI" id="CHEBI:15378"/>
        <dbReference type="ChEBI" id="CHEBI:29985"/>
        <dbReference type="ChEBI" id="CHEBI:30616"/>
        <dbReference type="ChEBI" id="CHEBI:37563"/>
        <dbReference type="ChEBI" id="CHEBI:43474"/>
        <dbReference type="ChEBI" id="CHEBI:46398"/>
        <dbReference type="ChEBI" id="CHEBI:58359"/>
        <dbReference type="ChEBI" id="CHEBI:456216"/>
        <dbReference type="EC" id="6.3.4.2"/>
    </reaction>
</comment>
<comment type="catalytic activity">
    <reaction evidence="1">
        <text>L-glutamine + H2O = L-glutamate + NH4(+)</text>
        <dbReference type="Rhea" id="RHEA:15889"/>
        <dbReference type="ChEBI" id="CHEBI:15377"/>
        <dbReference type="ChEBI" id="CHEBI:28938"/>
        <dbReference type="ChEBI" id="CHEBI:29985"/>
        <dbReference type="ChEBI" id="CHEBI:58359"/>
    </reaction>
</comment>
<comment type="catalytic activity">
    <reaction evidence="1">
        <text>UTP + NH4(+) + ATP = CTP + ADP + phosphate + 2 H(+)</text>
        <dbReference type="Rhea" id="RHEA:16597"/>
        <dbReference type="ChEBI" id="CHEBI:15378"/>
        <dbReference type="ChEBI" id="CHEBI:28938"/>
        <dbReference type="ChEBI" id="CHEBI:30616"/>
        <dbReference type="ChEBI" id="CHEBI:37563"/>
        <dbReference type="ChEBI" id="CHEBI:43474"/>
        <dbReference type="ChEBI" id="CHEBI:46398"/>
        <dbReference type="ChEBI" id="CHEBI:456216"/>
    </reaction>
</comment>
<comment type="activity regulation">
    <text evidence="1 3">Allosterically activated by GTP, when glutamine is the substrate; GTP has no effect on the reaction when ammonia is the substrate. The allosteric effector GTP functions by stabilizing the protein conformation that binds the tetrahedral intermediate(s) formed during glutamine hydrolysis. Inhibited by the product CTP, via allosteric rather than competitive inhibition (By similarity). Inhibited by 6-diazo-5-oxo-l-norleucine (DON) (PubMed:32507415).</text>
</comment>
<comment type="pathway">
    <text evidence="1">Pyrimidine metabolism; CTP biosynthesis via de novo pathway; CTP from UDP: step 2/2.</text>
</comment>
<comment type="subunit">
    <text evidence="1">Homotetramer.</text>
</comment>
<comment type="subcellular location">
    <subcellularLocation>
        <location evidence="3">Cytoplasm</location>
    </subcellularLocation>
    <text evidence="3">Localizes to the cytoophidium, a short subcellular filamentary structure where CTP synthase is compartmentalized. Only a few cells form cytoophidia under standard growth conditions, they are observed in late log phase. Stress conditions such as treatment with 50 uM 6-diazo-5-oxo-l-norleucine (DON, an inhibitor) or growth at low salt (1.5 M instead of the usual 3.4 M) also induces their appearance. In all these conditions cells are barely growing.</text>
</comment>
<comment type="miscellaneous">
    <text evidence="1">CTPSs have evolved a hybrid strategy for distinguishing between UTP and CTP. The overlapping regions of the product feedback inhibitory and substrate sites recognize a common feature in both compounds, the triphosphate moiety. To differentiate isosteric substrate and product pyrimidine rings, an additional pocket far from the expected kinase/ligase catalytic site, specifically recognizes the cytosine and ribose portions of the product inhibitor.</text>
</comment>
<comment type="similarity">
    <text evidence="1">Belongs to the CTP synthase family.</text>
</comment>
<comment type="sequence caution" evidence="5">
    <conflict type="erroneous initiation">
        <sequence resource="EMBL-CDS" id="AEM56317"/>
    </conflict>
    <text>Extended N-terminus.</text>
</comment>
<feature type="chain" id="PRO_0000451061" description="CTP synthase">
    <location>
        <begin position="1"/>
        <end position="553"/>
    </location>
</feature>
<feature type="domain" description="Glutamine amidotransferase type-1" evidence="1 2">
    <location>
        <begin position="307"/>
        <end position="544"/>
    </location>
</feature>
<feature type="region of interest" description="Amidoligase domain" evidence="1">
    <location>
        <begin position="1"/>
        <end position="277"/>
    </location>
</feature>
<feature type="active site" description="Nucleophile; for glutamine hydrolysis" evidence="1">
    <location>
        <position position="391"/>
    </location>
</feature>
<feature type="active site" evidence="1 2">
    <location>
        <position position="517"/>
    </location>
</feature>
<feature type="active site" evidence="1 2">
    <location>
        <position position="519"/>
    </location>
</feature>
<feature type="binding site" evidence="1">
    <location>
        <position position="26"/>
    </location>
    <ligand>
        <name>CTP</name>
        <dbReference type="ChEBI" id="CHEBI:37563"/>
        <note>allosteric inhibitor</note>
    </ligand>
</feature>
<feature type="binding site" evidence="1">
    <location>
        <position position="26"/>
    </location>
    <ligand>
        <name>UTP</name>
        <dbReference type="ChEBI" id="CHEBI:46398"/>
    </ligand>
</feature>
<feature type="binding site" evidence="1">
    <location>
        <begin position="27"/>
        <end position="32"/>
    </location>
    <ligand>
        <name>ATP</name>
        <dbReference type="ChEBI" id="CHEBI:30616"/>
    </ligand>
</feature>
<feature type="binding site" evidence="1">
    <location>
        <position position="84"/>
    </location>
    <ligand>
        <name>ATP</name>
        <dbReference type="ChEBI" id="CHEBI:30616"/>
    </ligand>
</feature>
<feature type="binding site" evidence="1">
    <location>
        <position position="84"/>
    </location>
    <ligand>
        <name>Mg(2+)</name>
        <dbReference type="ChEBI" id="CHEBI:18420"/>
    </ligand>
</feature>
<feature type="binding site" evidence="1">
    <location>
        <position position="152"/>
    </location>
    <ligand>
        <name>Mg(2+)</name>
        <dbReference type="ChEBI" id="CHEBI:18420"/>
    </ligand>
</feature>
<feature type="binding site" evidence="1">
    <location>
        <begin position="159"/>
        <end position="161"/>
    </location>
    <ligand>
        <name>CTP</name>
        <dbReference type="ChEBI" id="CHEBI:37563"/>
        <note>allosteric inhibitor</note>
    </ligand>
</feature>
<feature type="binding site" evidence="1">
    <location>
        <begin position="198"/>
        <end position="203"/>
    </location>
    <ligand>
        <name>CTP</name>
        <dbReference type="ChEBI" id="CHEBI:37563"/>
        <note>allosteric inhibitor</note>
    </ligand>
</feature>
<feature type="binding site" evidence="1">
    <location>
        <begin position="198"/>
        <end position="203"/>
    </location>
    <ligand>
        <name>UTP</name>
        <dbReference type="ChEBI" id="CHEBI:46398"/>
    </ligand>
</feature>
<feature type="binding site" evidence="1">
    <location>
        <position position="234"/>
    </location>
    <ligand>
        <name>CTP</name>
        <dbReference type="ChEBI" id="CHEBI:37563"/>
        <note>allosteric inhibitor</note>
    </ligand>
</feature>
<feature type="binding site" evidence="1">
    <location>
        <position position="234"/>
    </location>
    <ligand>
        <name>UTP</name>
        <dbReference type="ChEBI" id="CHEBI:46398"/>
    </ligand>
</feature>
<feature type="binding site" evidence="1">
    <location>
        <position position="252"/>
    </location>
    <ligand>
        <name>ATP</name>
        <dbReference type="ChEBI" id="CHEBI:30616"/>
    </ligand>
</feature>
<feature type="binding site" evidence="1">
    <location>
        <position position="364"/>
    </location>
    <ligand>
        <name>L-glutamine</name>
        <dbReference type="ChEBI" id="CHEBI:58359"/>
    </ligand>
</feature>
<feature type="binding site" evidence="1">
    <location>
        <begin position="392"/>
        <end position="395"/>
    </location>
    <ligand>
        <name>L-glutamine</name>
        <dbReference type="ChEBI" id="CHEBI:58359"/>
    </ligand>
</feature>
<feature type="binding site" evidence="1">
    <location>
        <position position="415"/>
    </location>
    <ligand>
        <name>L-glutamine</name>
        <dbReference type="ChEBI" id="CHEBI:58359"/>
    </ligand>
</feature>
<feature type="binding site" evidence="1">
    <location>
        <position position="472"/>
    </location>
    <ligand>
        <name>L-glutamine</name>
        <dbReference type="ChEBI" id="CHEBI:58359"/>
    </ligand>
</feature>
<evidence type="ECO:0000255" key="1">
    <source>
        <dbReference type="HAMAP-Rule" id="MF_01227"/>
    </source>
</evidence>
<evidence type="ECO:0000255" key="2">
    <source>
        <dbReference type="PROSITE-ProRule" id="PRU00605"/>
    </source>
</evidence>
<evidence type="ECO:0000269" key="3">
    <source>
    </source>
</evidence>
<evidence type="ECO:0000303" key="4">
    <source>
    </source>
</evidence>
<evidence type="ECO:0000305" key="5">
    <source>
    </source>
</evidence>
<dbReference type="EC" id="6.3.4.2" evidence="1"/>
<dbReference type="EMBL" id="CP002921">
    <property type="protein sequence ID" value="AEM56317.1"/>
    <property type="status" value="ALT_INIT"/>
    <property type="molecule type" value="Genomic_DNA"/>
</dbReference>
<dbReference type="RefSeq" id="WP_044951697.1">
    <property type="nucleotide sequence ID" value="NC_015948.1"/>
</dbReference>
<dbReference type="SMR" id="G0HV10"/>
<dbReference type="STRING" id="634497.HAH_0694"/>
<dbReference type="MEROPS" id="C26.964"/>
<dbReference type="KEGG" id="hhi:HAH_0694"/>
<dbReference type="eggNOG" id="arCOG00063">
    <property type="taxonomic scope" value="Archaea"/>
</dbReference>
<dbReference type="HOGENOM" id="CLU_011675_5_0_2"/>
<dbReference type="OrthoDB" id="52769at2157"/>
<dbReference type="UniPathway" id="UPA00159">
    <property type="reaction ID" value="UER00277"/>
</dbReference>
<dbReference type="Proteomes" id="UP000005629">
    <property type="component" value="Chromosome I"/>
</dbReference>
<dbReference type="GO" id="GO:0097268">
    <property type="term" value="C:cytoophidium"/>
    <property type="evidence" value="ECO:0000314"/>
    <property type="project" value="UniProtKB"/>
</dbReference>
<dbReference type="GO" id="GO:0005737">
    <property type="term" value="C:cytoplasm"/>
    <property type="evidence" value="ECO:0007669"/>
    <property type="project" value="UniProtKB-SubCell"/>
</dbReference>
<dbReference type="GO" id="GO:0005524">
    <property type="term" value="F:ATP binding"/>
    <property type="evidence" value="ECO:0007669"/>
    <property type="project" value="UniProtKB-KW"/>
</dbReference>
<dbReference type="GO" id="GO:0003883">
    <property type="term" value="F:CTP synthase activity"/>
    <property type="evidence" value="ECO:0007669"/>
    <property type="project" value="UniProtKB-UniRule"/>
</dbReference>
<dbReference type="GO" id="GO:0004359">
    <property type="term" value="F:glutaminase activity"/>
    <property type="evidence" value="ECO:0007669"/>
    <property type="project" value="RHEA"/>
</dbReference>
<dbReference type="GO" id="GO:0042802">
    <property type="term" value="F:identical protein binding"/>
    <property type="evidence" value="ECO:0007669"/>
    <property type="project" value="TreeGrafter"/>
</dbReference>
<dbReference type="GO" id="GO:0046872">
    <property type="term" value="F:metal ion binding"/>
    <property type="evidence" value="ECO:0007669"/>
    <property type="project" value="UniProtKB-KW"/>
</dbReference>
<dbReference type="GO" id="GO:0044210">
    <property type="term" value="P:'de novo' CTP biosynthetic process"/>
    <property type="evidence" value="ECO:0007669"/>
    <property type="project" value="UniProtKB-UniRule"/>
</dbReference>
<dbReference type="GO" id="GO:0019856">
    <property type="term" value="P:pyrimidine nucleobase biosynthetic process"/>
    <property type="evidence" value="ECO:0007669"/>
    <property type="project" value="TreeGrafter"/>
</dbReference>
<dbReference type="CDD" id="cd03113">
    <property type="entry name" value="CTPS_N"/>
    <property type="match status" value="1"/>
</dbReference>
<dbReference type="CDD" id="cd01746">
    <property type="entry name" value="GATase1_CTP_Synthase"/>
    <property type="match status" value="1"/>
</dbReference>
<dbReference type="FunFam" id="3.40.50.300:FF:000009">
    <property type="entry name" value="CTP synthase"/>
    <property type="match status" value="1"/>
</dbReference>
<dbReference type="FunFam" id="3.40.50.880:FF:000002">
    <property type="entry name" value="CTP synthase"/>
    <property type="match status" value="1"/>
</dbReference>
<dbReference type="Gene3D" id="3.40.50.880">
    <property type="match status" value="1"/>
</dbReference>
<dbReference type="Gene3D" id="3.40.50.300">
    <property type="entry name" value="P-loop containing nucleotide triphosphate hydrolases"/>
    <property type="match status" value="1"/>
</dbReference>
<dbReference type="HAMAP" id="MF_01227">
    <property type="entry name" value="PyrG"/>
    <property type="match status" value="1"/>
</dbReference>
<dbReference type="InterPro" id="IPR029062">
    <property type="entry name" value="Class_I_gatase-like"/>
</dbReference>
<dbReference type="InterPro" id="IPR004468">
    <property type="entry name" value="CTP_synthase"/>
</dbReference>
<dbReference type="InterPro" id="IPR017456">
    <property type="entry name" value="CTP_synthase_N"/>
</dbReference>
<dbReference type="InterPro" id="IPR017926">
    <property type="entry name" value="GATASE"/>
</dbReference>
<dbReference type="InterPro" id="IPR033828">
    <property type="entry name" value="GATase1_CTP_Synthase"/>
</dbReference>
<dbReference type="InterPro" id="IPR027417">
    <property type="entry name" value="P-loop_NTPase"/>
</dbReference>
<dbReference type="NCBIfam" id="NF003792">
    <property type="entry name" value="PRK05380.1"/>
    <property type="match status" value="1"/>
</dbReference>
<dbReference type="NCBIfam" id="TIGR00337">
    <property type="entry name" value="PyrG"/>
    <property type="match status" value="1"/>
</dbReference>
<dbReference type="PANTHER" id="PTHR11550">
    <property type="entry name" value="CTP SYNTHASE"/>
    <property type="match status" value="1"/>
</dbReference>
<dbReference type="PANTHER" id="PTHR11550:SF0">
    <property type="entry name" value="CTP SYNTHASE-RELATED"/>
    <property type="match status" value="1"/>
</dbReference>
<dbReference type="Pfam" id="PF06418">
    <property type="entry name" value="CTP_synth_N"/>
    <property type="match status" value="1"/>
</dbReference>
<dbReference type="Pfam" id="PF00117">
    <property type="entry name" value="GATase"/>
    <property type="match status" value="1"/>
</dbReference>
<dbReference type="SUPFAM" id="SSF52317">
    <property type="entry name" value="Class I glutamine amidotransferase-like"/>
    <property type="match status" value="1"/>
</dbReference>
<dbReference type="SUPFAM" id="SSF52540">
    <property type="entry name" value="P-loop containing nucleoside triphosphate hydrolases"/>
    <property type="match status" value="1"/>
</dbReference>
<dbReference type="PROSITE" id="PS51273">
    <property type="entry name" value="GATASE_TYPE_1"/>
    <property type="match status" value="1"/>
</dbReference>
<accession>G0HV10</accession>
<protein>
    <recommendedName>
        <fullName evidence="1 4">CTP synthase</fullName>
        <ecNumber evidence="1">6.3.4.2</ecNumber>
    </recommendedName>
    <alternativeName>
        <fullName evidence="1">Cytidine 5'-triphosphate synthase</fullName>
    </alternativeName>
    <alternativeName>
        <fullName evidence="1">Cytidine triphosphate synthetase</fullName>
        <shortName evidence="1">CTP synthetase</shortName>
        <shortName evidence="1 4">CTPS</shortName>
    </alternativeName>
    <alternativeName>
        <fullName evidence="1">UTP--ammonia ligase</fullName>
    </alternativeName>
</protein>
<proteinExistence type="inferred from homology"/>
<reference key="1">
    <citation type="journal article" date="2011" name="J. Bacteriol.">
        <title>Complete genome sequence of Haloarcula hispanica, a model haloarchaeon for studying genetics, metabolism, and virus-host interaction.</title>
        <authorList>
            <person name="Liu H."/>
            <person name="Wu Z."/>
            <person name="Li M."/>
            <person name="Zhang F."/>
            <person name="Zheng H."/>
            <person name="Han J."/>
            <person name="Liu J."/>
            <person name="Zhou J."/>
            <person name="Wang S."/>
            <person name="Xiang H."/>
        </authorList>
    </citation>
    <scope>NUCLEOTIDE SEQUENCE [LARGE SCALE GENOMIC DNA]</scope>
    <source>
        <strain>ATCC 33960 / DSM 4426 / JCM 8911 / NBRC 102182 / NCIMB 2187 / VKM B-1755</strain>
    </source>
</reference>
<reference key="2">
    <citation type="journal article" date="2020" name="J. Genet. Genomics">
        <title>CTP synthase forms cytoophidia in archaea.</title>
        <authorList>
            <person name="Zhou S."/>
            <person name="Xiang H."/>
            <person name="Liu J.L."/>
        </authorList>
    </citation>
    <scope>ACTIVITY REGULATION</scope>
    <scope>SUBCELLULAR LOCATION</scope>
    <source>
        <strain>ATCC 33960 / DSM 4426 / JCM 8911 / NBRC 102182 / NCIMB 2187 / VKM B-1755</strain>
    </source>
</reference>
<name>PYRG_HALHT</name>